<feature type="chain" id="PRO_1000138577" description="Alanine racemase">
    <location>
        <begin position="1"/>
        <end position="367"/>
    </location>
</feature>
<feature type="active site" description="Proton acceptor; specific for D-alanine" evidence="1">
    <location>
        <position position="35"/>
    </location>
</feature>
<feature type="active site" description="Proton acceptor; specific for L-alanine" evidence="1">
    <location>
        <position position="258"/>
    </location>
</feature>
<feature type="binding site" evidence="1">
    <location>
        <position position="130"/>
    </location>
    <ligand>
        <name>substrate</name>
    </ligand>
</feature>
<feature type="binding site" evidence="1">
    <location>
        <position position="306"/>
    </location>
    <ligand>
        <name>substrate</name>
    </ligand>
</feature>
<feature type="modified residue" description="N6-(pyridoxal phosphate)lysine" evidence="1">
    <location>
        <position position="35"/>
    </location>
</feature>
<keyword id="KW-0413">Isomerase</keyword>
<keyword id="KW-0663">Pyridoxal phosphate</keyword>
<protein>
    <recommendedName>
        <fullName evidence="1">Alanine racemase</fullName>
        <ecNumber evidence="1">5.1.1.1</ecNumber>
    </recommendedName>
</protein>
<reference key="1">
    <citation type="journal article" date="2008" name="PLoS ONE">
        <title>Comparative analysis of Acinetobacters: three genomes for three lifestyles.</title>
        <authorList>
            <person name="Vallenet D."/>
            <person name="Nordmann P."/>
            <person name="Barbe V."/>
            <person name="Poirel L."/>
            <person name="Mangenot S."/>
            <person name="Bataille E."/>
            <person name="Dossat C."/>
            <person name="Gas S."/>
            <person name="Kreimeyer A."/>
            <person name="Lenoble P."/>
            <person name="Oztas S."/>
            <person name="Poulain J."/>
            <person name="Segurens B."/>
            <person name="Robert C."/>
            <person name="Abergel C."/>
            <person name="Claverie J.-M."/>
            <person name="Raoult D."/>
            <person name="Medigue C."/>
            <person name="Weissenbach J."/>
            <person name="Cruveiller S."/>
        </authorList>
    </citation>
    <scope>NUCLEOTIDE SEQUENCE [LARGE SCALE GENOMIC DNA]</scope>
    <source>
        <strain>SDF</strain>
    </source>
</reference>
<sequence>MPRPITAVIHRQALQNNLAVVRKAMPNSKVFAVVKANAYGHGIERVYEAFKAADGFALLDLEEAKRIRALGWTGPILLLEGVFSPQDLFDCVQYQLSFTIHSEAQIEWVEQHPYPAQFDVFLKMNSGMSRLGFKPQHYVQAWERLNNLANVAKITHMMHFSDADGDRFGQQGIDYQITAFEEIVKDLPGERSVSNSAAILRYQDQLKSDYVRSGIMLYGSSPDYPTHSIADWGLQPTMSLRSEIISVQHLEPNESVGYGSNFVAEQPMTIGIVACGYADGYQRISPTGTPVLVDSVRTRTVGRVSMDMLAVDLTGIESAKVGSEVVLWGQSSTGVVLPIDDVAVSSGTVGYELMCAVTARVQFINQV</sequence>
<proteinExistence type="inferred from homology"/>
<gene>
    <name type="primary">alr</name>
    <name type="ordered locus">ABSDF0117</name>
</gene>
<name>ALR_ACIBS</name>
<comment type="function">
    <text evidence="1">Catalyzes the interconversion of L-alanine and D-alanine. May also act on other amino acids.</text>
</comment>
<comment type="catalytic activity">
    <reaction evidence="1">
        <text>L-alanine = D-alanine</text>
        <dbReference type="Rhea" id="RHEA:20249"/>
        <dbReference type="ChEBI" id="CHEBI:57416"/>
        <dbReference type="ChEBI" id="CHEBI:57972"/>
        <dbReference type="EC" id="5.1.1.1"/>
    </reaction>
</comment>
<comment type="cofactor">
    <cofactor evidence="1">
        <name>pyridoxal 5'-phosphate</name>
        <dbReference type="ChEBI" id="CHEBI:597326"/>
    </cofactor>
</comment>
<comment type="pathway">
    <text evidence="1">Amino-acid biosynthesis; D-alanine biosynthesis; D-alanine from L-alanine: step 1/1.</text>
</comment>
<comment type="similarity">
    <text evidence="1">Belongs to the alanine racemase family.</text>
</comment>
<accession>B0VNF6</accession>
<organism>
    <name type="scientific">Acinetobacter baumannii (strain SDF)</name>
    <dbReference type="NCBI Taxonomy" id="509170"/>
    <lineage>
        <taxon>Bacteria</taxon>
        <taxon>Pseudomonadati</taxon>
        <taxon>Pseudomonadota</taxon>
        <taxon>Gammaproteobacteria</taxon>
        <taxon>Moraxellales</taxon>
        <taxon>Moraxellaceae</taxon>
        <taxon>Acinetobacter</taxon>
        <taxon>Acinetobacter calcoaceticus/baumannii complex</taxon>
    </lineage>
</organism>
<dbReference type="EC" id="5.1.1.1" evidence="1"/>
<dbReference type="EMBL" id="CU468230">
    <property type="protein sequence ID" value="CAO99526.1"/>
    <property type="molecule type" value="Genomic_DNA"/>
</dbReference>
<dbReference type="SMR" id="B0VNF6"/>
<dbReference type="KEGG" id="abm:ABSDF0117"/>
<dbReference type="HOGENOM" id="CLU_028393_1_0_6"/>
<dbReference type="UniPathway" id="UPA00042">
    <property type="reaction ID" value="UER00497"/>
</dbReference>
<dbReference type="Proteomes" id="UP000001741">
    <property type="component" value="Chromosome"/>
</dbReference>
<dbReference type="GO" id="GO:0005829">
    <property type="term" value="C:cytosol"/>
    <property type="evidence" value="ECO:0007669"/>
    <property type="project" value="TreeGrafter"/>
</dbReference>
<dbReference type="GO" id="GO:0008784">
    <property type="term" value="F:alanine racemase activity"/>
    <property type="evidence" value="ECO:0007669"/>
    <property type="project" value="UniProtKB-UniRule"/>
</dbReference>
<dbReference type="GO" id="GO:0030170">
    <property type="term" value="F:pyridoxal phosphate binding"/>
    <property type="evidence" value="ECO:0007669"/>
    <property type="project" value="UniProtKB-UniRule"/>
</dbReference>
<dbReference type="GO" id="GO:0030632">
    <property type="term" value="P:D-alanine biosynthetic process"/>
    <property type="evidence" value="ECO:0007669"/>
    <property type="project" value="UniProtKB-UniRule"/>
</dbReference>
<dbReference type="CDD" id="cd06827">
    <property type="entry name" value="PLPDE_III_AR_proteobact"/>
    <property type="match status" value="1"/>
</dbReference>
<dbReference type="FunFam" id="3.20.20.10:FF:000002">
    <property type="entry name" value="Alanine racemase"/>
    <property type="match status" value="1"/>
</dbReference>
<dbReference type="Gene3D" id="3.20.20.10">
    <property type="entry name" value="Alanine racemase"/>
    <property type="match status" value="1"/>
</dbReference>
<dbReference type="Gene3D" id="2.40.37.10">
    <property type="entry name" value="Lyase, Ornithine Decarboxylase, Chain A, domain 1"/>
    <property type="match status" value="1"/>
</dbReference>
<dbReference type="HAMAP" id="MF_01201">
    <property type="entry name" value="Ala_racemase"/>
    <property type="match status" value="1"/>
</dbReference>
<dbReference type="InterPro" id="IPR000821">
    <property type="entry name" value="Ala_racemase"/>
</dbReference>
<dbReference type="InterPro" id="IPR009006">
    <property type="entry name" value="Ala_racemase/Decarboxylase_C"/>
</dbReference>
<dbReference type="InterPro" id="IPR011079">
    <property type="entry name" value="Ala_racemase_C"/>
</dbReference>
<dbReference type="InterPro" id="IPR001608">
    <property type="entry name" value="Ala_racemase_N"/>
</dbReference>
<dbReference type="InterPro" id="IPR020622">
    <property type="entry name" value="Ala_racemase_pyridoxalP-BS"/>
</dbReference>
<dbReference type="InterPro" id="IPR029066">
    <property type="entry name" value="PLP-binding_barrel"/>
</dbReference>
<dbReference type="NCBIfam" id="TIGR00492">
    <property type="entry name" value="alr"/>
    <property type="match status" value="1"/>
</dbReference>
<dbReference type="PANTHER" id="PTHR30511">
    <property type="entry name" value="ALANINE RACEMASE"/>
    <property type="match status" value="1"/>
</dbReference>
<dbReference type="PANTHER" id="PTHR30511:SF0">
    <property type="entry name" value="ALANINE RACEMASE, CATABOLIC-RELATED"/>
    <property type="match status" value="1"/>
</dbReference>
<dbReference type="Pfam" id="PF00842">
    <property type="entry name" value="Ala_racemase_C"/>
    <property type="match status" value="1"/>
</dbReference>
<dbReference type="Pfam" id="PF01168">
    <property type="entry name" value="Ala_racemase_N"/>
    <property type="match status" value="1"/>
</dbReference>
<dbReference type="PRINTS" id="PR00992">
    <property type="entry name" value="ALARACEMASE"/>
</dbReference>
<dbReference type="SMART" id="SM01005">
    <property type="entry name" value="Ala_racemase_C"/>
    <property type="match status" value="1"/>
</dbReference>
<dbReference type="SUPFAM" id="SSF50621">
    <property type="entry name" value="Alanine racemase C-terminal domain-like"/>
    <property type="match status" value="1"/>
</dbReference>
<dbReference type="SUPFAM" id="SSF51419">
    <property type="entry name" value="PLP-binding barrel"/>
    <property type="match status" value="1"/>
</dbReference>
<dbReference type="PROSITE" id="PS00395">
    <property type="entry name" value="ALANINE_RACEMASE"/>
    <property type="match status" value="1"/>
</dbReference>
<evidence type="ECO:0000255" key="1">
    <source>
        <dbReference type="HAMAP-Rule" id="MF_01201"/>
    </source>
</evidence>